<evidence type="ECO:0000255" key="1">
    <source>
        <dbReference type="HAMAP-Rule" id="MF_00536"/>
    </source>
</evidence>
<comment type="function">
    <text evidence="1">Catalyzes the NAD(P)-dependent oxidation of 4-(phosphooxy)-L-threonine (HTP) into 2-amino-3-oxo-4-(phosphooxy)butyric acid which spontaneously decarboxylates to form 3-amino-2-oxopropyl phosphate (AHAP).</text>
</comment>
<comment type="catalytic activity">
    <reaction evidence="1">
        <text>4-(phosphooxy)-L-threonine + NAD(+) = 3-amino-2-oxopropyl phosphate + CO2 + NADH</text>
        <dbReference type="Rhea" id="RHEA:32275"/>
        <dbReference type="ChEBI" id="CHEBI:16526"/>
        <dbReference type="ChEBI" id="CHEBI:57279"/>
        <dbReference type="ChEBI" id="CHEBI:57540"/>
        <dbReference type="ChEBI" id="CHEBI:57945"/>
        <dbReference type="ChEBI" id="CHEBI:58452"/>
        <dbReference type="EC" id="1.1.1.262"/>
    </reaction>
</comment>
<comment type="cofactor">
    <cofactor evidence="1">
        <name>Zn(2+)</name>
        <dbReference type="ChEBI" id="CHEBI:29105"/>
    </cofactor>
    <cofactor evidence="1">
        <name>Mg(2+)</name>
        <dbReference type="ChEBI" id="CHEBI:18420"/>
    </cofactor>
    <cofactor evidence="1">
        <name>Co(2+)</name>
        <dbReference type="ChEBI" id="CHEBI:48828"/>
    </cofactor>
    <text evidence="1">Binds 1 divalent metal cation per subunit. Can use ions such as Zn(2+), Mg(2+) or Co(2+).</text>
</comment>
<comment type="pathway">
    <text evidence="1">Cofactor biosynthesis; pyridoxine 5'-phosphate biosynthesis; pyridoxine 5'-phosphate from D-erythrose 4-phosphate: step 4/5.</text>
</comment>
<comment type="subunit">
    <text evidence="1">Homodimer.</text>
</comment>
<comment type="subcellular location">
    <subcellularLocation>
        <location evidence="1">Cytoplasm</location>
    </subcellularLocation>
</comment>
<comment type="miscellaneous">
    <text evidence="1">The active site is located at the dimer interface.</text>
</comment>
<comment type="similarity">
    <text evidence="1">Belongs to the PdxA family.</text>
</comment>
<accession>A4VHI1</accession>
<gene>
    <name evidence="1" type="primary">pdxA</name>
    <name type="ordered locus">PST_0727</name>
</gene>
<proteinExistence type="inferred from homology"/>
<keyword id="KW-0170">Cobalt</keyword>
<keyword id="KW-0963">Cytoplasm</keyword>
<keyword id="KW-0460">Magnesium</keyword>
<keyword id="KW-0479">Metal-binding</keyword>
<keyword id="KW-0520">NAD</keyword>
<keyword id="KW-0521">NADP</keyword>
<keyword id="KW-0560">Oxidoreductase</keyword>
<keyword id="KW-0664">Pyridoxine biosynthesis</keyword>
<keyword id="KW-1185">Reference proteome</keyword>
<keyword id="KW-0862">Zinc</keyword>
<sequence>MPTSRPFVLTPGEPAGIGPDLCLLLARQAQPRPLVAIASRALLAQRAEQLGLSIELRDAGPQDWPGEPAPANCLYVWDTPLATAVTAGQLDPRNAHYVLETLTRAGRGCLDGSFAGIITAPVHKGVINEAGIPFSGHTEFLAELTLTEQVVMMLATRGLRVALVTTHLPLRDVAEAITAERLQRVTRILHADLVSKFGIARPRILVCGLNPHAGEGGHLGREEIEVIEPTLAGLREEGIELIGPLPADTLFTPKHLEHCDAVLAMYHDQGLPVLKYKGFGAAVNVTLGLPIVRTSVDHGTALDLAGTGRVDIGSLQVALETAYQMSGAA</sequence>
<protein>
    <recommendedName>
        <fullName evidence="1">4-hydroxythreonine-4-phosphate dehydrogenase</fullName>
        <ecNumber evidence="1">1.1.1.262</ecNumber>
    </recommendedName>
    <alternativeName>
        <fullName evidence="1">4-(phosphohydroxy)-L-threonine dehydrogenase</fullName>
    </alternativeName>
</protein>
<reference key="1">
    <citation type="journal article" date="2008" name="Proc. Natl. Acad. Sci. U.S.A.">
        <title>Nitrogen fixation island and rhizosphere competence traits in the genome of root-associated Pseudomonas stutzeri A1501.</title>
        <authorList>
            <person name="Yan Y."/>
            <person name="Yang J."/>
            <person name="Dou Y."/>
            <person name="Chen M."/>
            <person name="Ping S."/>
            <person name="Peng J."/>
            <person name="Lu W."/>
            <person name="Zhang W."/>
            <person name="Yao Z."/>
            <person name="Li H."/>
            <person name="Liu W."/>
            <person name="He S."/>
            <person name="Geng L."/>
            <person name="Zhang X."/>
            <person name="Yang F."/>
            <person name="Yu H."/>
            <person name="Zhan Y."/>
            <person name="Li D."/>
            <person name="Lin Z."/>
            <person name="Wang Y."/>
            <person name="Elmerich C."/>
            <person name="Lin M."/>
            <person name="Jin Q."/>
        </authorList>
    </citation>
    <scope>NUCLEOTIDE SEQUENCE [LARGE SCALE GENOMIC DNA]</scope>
    <source>
        <strain>A1501</strain>
    </source>
</reference>
<dbReference type="EC" id="1.1.1.262" evidence="1"/>
<dbReference type="EMBL" id="CP000304">
    <property type="protein sequence ID" value="ABP78432.1"/>
    <property type="molecule type" value="Genomic_DNA"/>
</dbReference>
<dbReference type="RefSeq" id="WP_011911939.1">
    <property type="nucleotide sequence ID" value="NC_009434.1"/>
</dbReference>
<dbReference type="SMR" id="A4VHI1"/>
<dbReference type="KEGG" id="psa:PST_0727"/>
<dbReference type="eggNOG" id="COG1995">
    <property type="taxonomic scope" value="Bacteria"/>
</dbReference>
<dbReference type="HOGENOM" id="CLU_040168_1_0_6"/>
<dbReference type="UniPathway" id="UPA00244">
    <property type="reaction ID" value="UER00312"/>
</dbReference>
<dbReference type="Proteomes" id="UP000000233">
    <property type="component" value="Chromosome"/>
</dbReference>
<dbReference type="GO" id="GO:0005737">
    <property type="term" value="C:cytoplasm"/>
    <property type="evidence" value="ECO:0007669"/>
    <property type="project" value="UniProtKB-SubCell"/>
</dbReference>
<dbReference type="GO" id="GO:0050570">
    <property type="term" value="F:4-hydroxythreonine-4-phosphate dehydrogenase activity"/>
    <property type="evidence" value="ECO:0007669"/>
    <property type="project" value="UniProtKB-UniRule"/>
</dbReference>
<dbReference type="GO" id="GO:0050897">
    <property type="term" value="F:cobalt ion binding"/>
    <property type="evidence" value="ECO:0007669"/>
    <property type="project" value="UniProtKB-UniRule"/>
</dbReference>
<dbReference type="GO" id="GO:0000287">
    <property type="term" value="F:magnesium ion binding"/>
    <property type="evidence" value="ECO:0007669"/>
    <property type="project" value="UniProtKB-UniRule"/>
</dbReference>
<dbReference type="GO" id="GO:0051287">
    <property type="term" value="F:NAD binding"/>
    <property type="evidence" value="ECO:0007669"/>
    <property type="project" value="InterPro"/>
</dbReference>
<dbReference type="GO" id="GO:0008270">
    <property type="term" value="F:zinc ion binding"/>
    <property type="evidence" value="ECO:0007669"/>
    <property type="project" value="UniProtKB-UniRule"/>
</dbReference>
<dbReference type="GO" id="GO:0042823">
    <property type="term" value="P:pyridoxal phosphate biosynthetic process"/>
    <property type="evidence" value="ECO:0007669"/>
    <property type="project" value="UniProtKB-UniRule"/>
</dbReference>
<dbReference type="GO" id="GO:0008615">
    <property type="term" value="P:pyridoxine biosynthetic process"/>
    <property type="evidence" value="ECO:0007669"/>
    <property type="project" value="UniProtKB-UniRule"/>
</dbReference>
<dbReference type="Gene3D" id="3.40.718.10">
    <property type="entry name" value="Isopropylmalate Dehydrogenase"/>
    <property type="match status" value="1"/>
</dbReference>
<dbReference type="HAMAP" id="MF_00536">
    <property type="entry name" value="PdxA"/>
    <property type="match status" value="1"/>
</dbReference>
<dbReference type="InterPro" id="IPR037510">
    <property type="entry name" value="PdxA"/>
</dbReference>
<dbReference type="InterPro" id="IPR005255">
    <property type="entry name" value="PdxA_fam"/>
</dbReference>
<dbReference type="NCBIfam" id="TIGR00557">
    <property type="entry name" value="pdxA"/>
    <property type="match status" value="1"/>
</dbReference>
<dbReference type="PANTHER" id="PTHR30004">
    <property type="entry name" value="4-HYDROXYTHREONINE-4-PHOSPHATE DEHYDROGENASE"/>
    <property type="match status" value="1"/>
</dbReference>
<dbReference type="PANTHER" id="PTHR30004:SF5">
    <property type="entry name" value="4-HYDROXYTHREONINE-4-PHOSPHATE DEHYDROGENASE"/>
    <property type="match status" value="1"/>
</dbReference>
<dbReference type="Pfam" id="PF04166">
    <property type="entry name" value="PdxA"/>
    <property type="match status" value="1"/>
</dbReference>
<dbReference type="SUPFAM" id="SSF53659">
    <property type="entry name" value="Isocitrate/Isopropylmalate dehydrogenase-like"/>
    <property type="match status" value="1"/>
</dbReference>
<organism>
    <name type="scientific">Stutzerimonas stutzeri (strain A1501)</name>
    <name type="common">Pseudomonas stutzeri</name>
    <dbReference type="NCBI Taxonomy" id="379731"/>
    <lineage>
        <taxon>Bacteria</taxon>
        <taxon>Pseudomonadati</taxon>
        <taxon>Pseudomonadota</taxon>
        <taxon>Gammaproteobacteria</taxon>
        <taxon>Pseudomonadales</taxon>
        <taxon>Pseudomonadaceae</taxon>
        <taxon>Stutzerimonas</taxon>
    </lineage>
</organism>
<name>PDXA_STUS1</name>
<feature type="chain" id="PRO_1000051509" description="4-hydroxythreonine-4-phosphate dehydrogenase">
    <location>
        <begin position="1"/>
        <end position="329"/>
    </location>
</feature>
<feature type="binding site" evidence="1">
    <location>
        <position position="137"/>
    </location>
    <ligand>
        <name>substrate</name>
    </ligand>
</feature>
<feature type="binding site" evidence="1">
    <location>
        <position position="138"/>
    </location>
    <ligand>
        <name>substrate</name>
    </ligand>
</feature>
<feature type="binding site" evidence="1">
    <location>
        <position position="167"/>
    </location>
    <ligand>
        <name>a divalent metal cation</name>
        <dbReference type="ChEBI" id="CHEBI:60240"/>
        <note>ligand shared between dimeric partners</note>
    </ligand>
</feature>
<feature type="binding site" evidence="1">
    <location>
        <position position="212"/>
    </location>
    <ligand>
        <name>a divalent metal cation</name>
        <dbReference type="ChEBI" id="CHEBI:60240"/>
        <note>ligand shared between dimeric partners</note>
    </ligand>
</feature>
<feature type="binding site" evidence="1">
    <location>
        <position position="267"/>
    </location>
    <ligand>
        <name>a divalent metal cation</name>
        <dbReference type="ChEBI" id="CHEBI:60240"/>
        <note>ligand shared between dimeric partners</note>
    </ligand>
</feature>
<feature type="binding site" evidence="1">
    <location>
        <position position="275"/>
    </location>
    <ligand>
        <name>substrate</name>
    </ligand>
</feature>
<feature type="binding site" evidence="1">
    <location>
        <position position="284"/>
    </location>
    <ligand>
        <name>substrate</name>
    </ligand>
</feature>
<feature type="binding site" evidence="1">
    <location>
        <position position="293"/>
    </location>
    <ligand>
        <name>substrate</name>
    </ligand>
</feature>